<proteinExistence type="inferred from homology"/>
<accession>B0CGM4</accession>
<evidence type="ECO:0000255" key="1">
    <source>
        <dbReference type="HAMAP-Rule" id="MF_00223"/>
    </source>
</evidence>
<keyword id="KW-0342">GTP-binding</keyword>
<keyword id="KW-0378">Hydrolase</keyword>
<keyword id="KW-0479">Metal-binding</keyword>
<keyword id="KW-0547">Nucleotide-binding</keyword>
<keyword id="KW-0554">One-carbon metabolism</keyword>
<keyword id="KW-0862">Zinc</keyword>
<feature type="chain" id="PRO_1000078136" description="GTP cyclohydrolase 1">
    <location>
        <begin position="1"/>
        <end position="213"/>
    </location>
</feature>
<feature type="binding site" evidence="1">
    <location>
        <position position="104"/>
    </location>
    <ligand>
        <name>Zn(2+)</name>
        <dbReference type="ChEBI" id="CHEBI:29105"/>
    </ligand>
</feature>
<feature type="binding site" evidence="1">
    <location>
        <position position="107"/>
    </location>
    <ligand>
        <name>Zn(2+)</name>
        <dbReference type="ChEBI" id="CHEBI:29105"/>
    </ligand>
</feature>
<feature type="binding site" evidence="1">
    <location>
        <position position="175"/>
    </location>
    <ligand>
        <name>Zn(2+)</name>
        <dbReference type="ChEBI" id="CHEBI:29105"/>
    </ligand>
</feature>
<reference key="1">
    <citation type="submission" date="2007-12" db="EMBL/GenBank/DDBJ databases">
        <title>Brucella suis ATCC 23445 whole genome shotgun sequencing project.</title>
        <authorList>
            <person name="Setubal J.C."/>
            <person name="Bowns C."/>
            <person name="Boyle S."/>
            <person name="Crasta O.R."/>
            <person name="Czar M.J."/>
            <person name="Dharmanolla C."/>
            <person name="Gillespie J.J."/>
            <person name="Kenyon R.W."/>
            <person name="Lu J."/>
            <person name="Mane S."/>
            <person name="Mohapatra S."/>
            <person name="Nagrani S."/>
            <person name="Purkayastha A."/>
            <person name="Rajasimha H.K."/>
            <person name="Shallom J.M."/>
            <person name="Shallom S."/>
            <person name="Shukla M."/>
            <person name="Snyder E.E."/>
            <person name="Sobral B.W."/>
            <person name="Wattam A.R."/>
            <person name="Will R."/>
            <person name="Williams K."/>
            <person name="Yoo H."/>
            <person name="Bruce D."/>
            <person name="Detter C."/>
            <person name="Munk C."/>
            <person name="Brettin T.S."/>
        </authorList>
    </citation>
    <scope>NUCLEOTIDE SEQUENCE [LARGE SCALE GENOMIC DNA]</scope>
    <source>
        <strain>ATCC 23445 / NCTC 10510</strain>
    </source>
</reference>
<name>GCH1_BRUSI</name>
<comment type="catalytic activity">
    <reaction evidence="1">
        <text>GTP + H2O = 7,8-dihydroneopterin 3'-triphosphate + formate + H(+)</text>
        <dbReference type="Rhea" id="RHEA:17473"/>
        <dbReference type="ChEBI" id="CHEBI:15377"/>
        <dbReference type="ChEBI" id="CHEBI:15378"/>
        <dbReference type="ChEBI" id="CHEBI:15740"/>
        <dbReference type="ChEBI" id="CHEBI:37565"/>
        <dbReference type="ChEBI" id="CHEBI:58462"/>
        <dbReference type="EC" id="3.5.4.16"/>
    </reaction>
</comment>
<comment type="pathway">
    <text evidence="1">Cofactor biosynthesis; 7,8-dihydroneopterin triphosphate biosynthesis; 7,8-dihydroneopterin triphosphate from GTP: step 1/1.</text>
</comment>
<comment type="subunit">
    <text evidence="1">Homomer.</text>
</comment>
<comment type="similarity">
    <text evidence="1">Belongs to the GTP cyclohydrolase I family.</text>
</comment>
<gene>
    <name evidence="1" type="primary">folE</name>
    <name type="ordered locus">BSUIS_A1119</name>
</gene>
<protein>
    <recommendedName>
        <fullName evidence="1">GTP cyclohydrolase 1</fullName>
        <ecNumber evidence="1">3.5.4.16</ecNumber>
    </recommendedName>
    <alternativeName>
        <fullName evidence="1">GTP cyclohydrolase I</fullName>
        <shortName evidence="1">GTP-CH-I</shortName>
    </alternativeName>
</protein>
<sequence>MDARILQDNDDTSLPVNQASVTRIHKKPGKPEAEAAVRTLLLWAGEDPDREGLLETPKRVAKAYQELFGGYSESPEEVLGTTFEEVAGYDDMVLVKDISFFSHCEHHMVPIIGKAHVAYLPEGRVVGLSKIARVVDIFARRLQTQESITAQIADSIQRILKPRGVAVMIEAEHMCMAMRSIRKQGSSTITTTFTGDFKEKADQQVRFMTLIRT</sequence>
<organism>
    <name type="scientific">Brucella suis (strain ATCC 23445 / NCTC 10510)</name>
    <dbReference type="NCBI Taxonomy" id="470137"/>
    <lineage>
        <taxon>Bacteria</taxon>
        <taxon>Pseudomonadati</taxon>
        <taxon>Pseudomonadota</taxon>
        <taxon>Alphaproteobacteria</taxon>
        <taxon>Hyphomicrobiales</taxon>
        <taxon>Brucellaceae</taxon>
        <taxon>Brucella/Ochrobactrum group</taxon>
        <taxon>Brucella</taxon>
    </lineage>
</organism>
<dbReference type="EC" id="3.5.4.16" evidence="1"/>
<dbReference type="EMBL" id="CP000911">
    <property type="protein sequence ID" value="ABY38175.1"/>
    <property type="molecule type" value="Genomic_DNA"/>
</dbReference>
<dbReference type="RefSeq" id="WP_006072792.1">
    <property type="nucleotide sequence ID" value="NC_010169.1"/>
</dbReference>
<dbReference type="SMR" id="B0CGM4"/>
<dbReference type="KEGG" id="bmt:BSUIS_A1119"/>
<dbReference type="HOGENOM" id="CLU_049768_3_1_5"/>
<dbReference type="UniPathway" id="UPA00848">
    <property type="reaction ID" value="UER00151"/>
</dbReference>
<dbReference type="Proteomes" id="UP000008545">
    <property type="component" value="Chromosome I"/>
</dbReference>
<dbReference type="GO" id="GO:0005737">
    <property type="term" value="C:cytoplasm"/>
    <property type="evidence" value="ECO:0007669"/>
    <property type="project" value="TreeGrafter"/>
</dbReference>
<dbReference type="GO" id="GO:0005525">
    <property type="term" value="F:GTP binding"/>
    <property type="evidence" value="ECO:0007669"/>
    <property type="project" value="UniProtKB-KW"/>
</dbReference>
<dbReference type="GO" id="GO:0003934">
    <property type="term" value="F:GTP cyclohydrolase I activity"/>
    <property type="evidence" value="ECO:0007669"/>
    <property type="project" value="UniProtKB-UniRule"/>
</dbReference>
<dbReference type="GO" id="GO:0008270">
    <property type="term" value="F:zinc ion binding"/>
    <property type="evidence" value="ECO:0007669"/>
    <property type="project" value="UniProtKB-UniRule"/>
</dbReference>
<dbReference type="GO" id="GO:0006730">
    <property type="term" value="P:one-carbon metabolic process"/>
    <property type="evidence" value="ECO:0007669"/>
    <property type="project" value="UniProtKB-UniRule"/>
</dbReference>
<dbReference type="GO" id="GO:0006729">
    <property type="term" value="P:tetrahydrobiopterin biosynthetic process"/>
    <property type="evidence" value="ECO:0007669"/>
    <property type="project" value="TreeGrafter"/>
</dbReference>
<dbReference type="GO" id="GO:0046654">
    <property type="term" value="P:tetrahydrofolate biosynthetic process"/>
    <property type="evidence" value="ECO:0007669"/>
    <property type="project" value="UniProtKB-UniRule"/>
</dbReference>
<dbReference type="FunFam" id="1.10.286.10:FF:000001">
    <property type="entry name" value="GTP cyclohydrolase 1"/>
    <property type="match status" value="1"/>
</dbReference>
<dbReference type="FunFam" id="3.30.1130.10:FF:000001">
    <property type="entry name" value="GTP cyclohydrolase 1"/>
    <property type="match status" value="1"/>
</dbReference>
<dbReference type="Gene3D" id="1.10.286.10">
    <property type="match status" value="1"/>
</dbReference>
<dbReference type="Gene3D" id="3.30.1130.10">
    <property type="match status" value="1"/>
</dbReference>
<dbReference type="HAMAP" id="MF_00223">
    <property type="entry name" value="FolE"/>
    <property type="match status" value="1"/>
</dbReference>
<dbReference type="InterPro" id="IPR043133">
    <property type="entry name" value="GTP-CH-I_C/QueF"/>
</dbReference>
<dbReference type="InterPro" id="IPR043134">
    <property type="entry name" value="GTP-CH-I_N"/>
</dbReference>
<dbReference type="InterPro" id="IPR001474">
    <property type="entry name" value="GTP_CycHdrlase_I"/>
</dbReference>
<dbReference type="InterPro" id="IPR018234">
    <property type="entry name" value="GTP_CycHdrlase_I_CS"/>
</dbReference>
<dbReference type="InterPro" id="IPR020602">
    <property type="entry name" value="GTP_CycHdrlase_I_dom"/>
</dbReference>
<dbReference type="NCBIfam" id="TIGR00063">
    <property type="entry name" value="folE"/>
    <property type="match status" value="1"/>
</dbReference>
<dbReference type="NCBIfam" id="NF006825">
    <property type="entry name" value="PRK09347.1-2"/>
    <property type="match status" value="1"/>
</dbReference>
<dbReference type="NCBIfam" id="NF006826">
    <property type="entry name" value="PRK09347.1-3"/>
    <property type="match status" value="1"/>
</dbReference>
<dbReference type="PANTHER" id="PTHR11109:SF7">
    <property type="entry name" value="GTP CYCLOHYDROLASE 1"/>
    <property type="match status" value="1"/>
</dbReference>
<dbReference type="PANTHER" id="PTHR11109">
    <property type="entry name" value="GTP CYCLOHYDROLASE I"/>
    <property type="match status" value="1"/>
</dbReference>
<dbReference type="Pfam" id="PF01227">
    <property type="entry name" value="GTP_cyclohydroI"/>
    <property type="match status" value="1"/>
</dbReference>
<dbReference type="SUPFAM" id="SSF55620">
    <property type="entry name" value="Tetrahydrobiopterin biosynthesis enzymes-like"/>
    <property type="match status" value="1"/>
</dbReference>
<dbReference type="PROSITE" id="PS00859">
    <property type="entry name" value="GTP_CYCLOHYDROL_1_1"/>
    <property type="match status" value="1"/>
</dbReference>